<evidence type="ECO:0000255" key="1">
    <source>
        <dbReference type="HAMAP-Rule" id="MF_00209"/>
    </source>
</evidence>
<sequence length="175" mass="19424">MGLENVPAGKALPDDIYVVIEIPANSDPIKYEVDKESGSLFVDRFMSTAMFYPANYGYVNHTLSSDGDPVDVLVPTPYPLQPGSVIRCRPVGVLKMTDEAGGDAKVVAVPHTKLTKEYDHIKDVNDLPALLKAQIQHFFESYKALEVGKWVKVEGWGDVNEARQEILDSFERAKK</sequence>
<accession>Q7VPC0</accession>
<organism>
    <name type="scientific">Haemophilus ducreyi (strain 35000HP / ATCC 700724)</name>
    <dbReference type="NCBI Taxonomy" id="233412"/>
    <lineage>
        <taxon>Bacteria</taxon>
        <taxon>Pseudomonadati</taxon>
        <taxon>Pseudomonadota</taxon>
        <taxon>Gammaproteobacteria</taxon>
        <taxon>Pasteurellales</taxon>
        <taxon>Pasteurellaceae</taxon>
        <taxon>Haemophilus</taxon>
    </lineage>
</organism>
<gene>
    <name evidence="1" type="primary">ppa</name>
    <name type="ordered locus">HD_0169</name>
</gene>
<comment type="function">
    <text evidence="1">Catalyzes the hydrolysis of inorganic pyrophosphate (PPi) forming two phosphate ions.</text>
</comment>
<comment type="catalytic activity">
    <reaction evidence="1">
        <text>diphosphate + H2O = 2 phosphate + H(+)</text>
        <dbReference type="Rhea" id="RHEA:24576"/>
        <dbReference type="ChEBI" id="CHEBI:15377"/>
        <dbReference type="ChEBI" id="CHEBI:15378"/>
        <dbReference type="ChEBI" id="CHEBI:33019"/>
        <dbReference type="ChEBI" id="CHEBI:43474"/>
        <dbReference type="EC" id="3.6.1.1"/>
    </reaction>
</comment>
<comment type="cofactor">
    <cofactor evidence="1">
        <name>Mg(2+)</name>
        <dbReference type="ChEBI" id="CHEBI:18420"/>
    </cofactor>
</comment>
<comment type="subunit">
    <text evidence="1">Homohexamer.</text>
</comment>
<comment type="subcellular location">
    <subcellularLocation>
        <location evidence="1">Cytoplasm</location>
    </subcellularLocation>
</comment>
<comment type="similarity">
    <text evidence="1">Belongs to the PPase family.</text>
</comment>
<protein>
    <recommendedName>
        <fullName evidence="1">Inorganic pyrophosphatase</fullName>
        <ecNumber evidence="1">3.6.1.1</ecNumber>
    </recommendedName>
    <alternativeName>
        <fullName evidence="1">Pyrophosphate phospho-hydrolase</fullName>
        <shortName evidence="1">PPase</shortName>
    </alternativeName>
</protein>
<reference key="1">
    <citation type="submission" date="2003-06" db="EMBL/GenBank/DDBJ databases">
        <title>The complete genome sequence of Haemophilus ducreyi.</title>
        <authorList>
            <person name="Munson R.S. Jr."/>
            <person name="Ray W.C."/>
            <person name="Mahairas G."/>
            <person name="Sabo P."/>
            <person name="Mungur R."/>
            <person name="Johnson L."/>
            <person name="Nguyen D."/>
            <person name="Wang J."/>
            <person name="Forst C."/>
            <person name="Hood L."/>
        </authorList>
    </citation>
    <scope>NUCLEOTIDE SEQUENCE [LARGE SCALE GENOMIC DNA]</scope>
    <source>
        <strain>35000HP / ATCC 700724</strain>
    </source>
</reference>
<dbReference type="EC" id="3.6.1.1" evidence="1"/>
<dbReference type="EMBL" id="AE017143">
    <property type="protein sequence ID" value="AAP95162.1"/>
    <property type="molecule type" value="Genomic_DNA"/>
</dbReference>
<dbReference type="RefSeq" id="WP_010944216.1">
    <property type="nucleotide sequence ID" value="NC_002940.2"/>
</dbReference>
<dbReference type="SMR" id="Q7VPC0"/>
<dbReference type="STRING" id="233412.HD_0169"/>
<dbReference type="KEGG" id="hdu:HD_0169"/>
<dbReference type="eggNOG" id="COG0221">
    <property type="taxonomic scope" value="Bacteria"/>
</dbReference>
<dbReference type="HOGENOM" id="CLU_073198_1_0_6"/>
<dbReference type="OrthoDB" id="5187599at2"/>
<dbReference type="Proteomes" id="UP000001022">
    <property type="component" value="Chromosome"/>
</dbReference>
<dbReference type="GO" id="GO:0005737">
    <property type="term" value="C:cytoplasm"/>
    <property type="evidence" value="ECO:0007669"/>
    <property type="project" value="UniProtKB-SubCell"/>
</dbReference>
<dbReference type="GO" id="GO:0004427">
    <property type="term" value="F:inorganic diphosphate phosphatase activity"/>
    <property type="evidence" value="ECO:0007669"/>
    <property type="project" value="UniProtKB-UniRule"/>
</dbReference>
<dbReference type="GO" id="GO:0000287">
    <property type="term" value="F:magnesium ion binding"/>
    <property type="evidence" value="ECO:0007669"/>
    <property type="project" value="UniProtKB-UniRule"/>
</dbReference>
<dbReference type="GO" id="GO:0006796">
    <property type="term" value="P:phosphate-containing compound metabolic process"/>
    <property type="evidence" value="ECO:0007669"/>
    <property type="project" value="InterPro"/>
</dbReference>
<dbReference type="CDD" id="cd00412">
    <property type="entry name" value="pyrophosphatase"/>
    <property type="match status" value="1"/>
</dbReference>
<dbReference type="FunFam" id="3.90.80.10:FF:000001">
    <property type="entry name" value="Inorganic pyrophosphatase"/>
    <property type="match status" value="1"/>
</dbReference>
<dbReference type="Gene3D" id="3.90.80.10">
    <property type="entry name" value="Inorganic pyrophosphatase"/>
    <property type="match status" value="1"/>
</dbReference>
<dbReference type="HAMAP" id="MF_00209">
    <property type="entry name" value="Inorganic_PPase"/>
    <property type="match status" value="1"/>
</dbReference>
<dbReference type="InterPro" id="IPR008162">
    <property type="entry name" value="Pyrophosphatase"/>
</dbReference>
<dbReference type="InterPro" id="IPR036649">
    <property type="entry name" value="Pyrophosphatase_sf"/>
</dbReference>
<dbReference type="NCBIfam" id="NF002317">
    <property type="entry name" value="PRK01250.1"/>
    <property type="match status" value="1"/>
</dbReference>
<dbReference type="PANTHER" id="PTHR10286">
    <property type="entry name" value="INORGANIC PYROPHOSPHATASE"/>
    <property type="match status" value="1"/>
</dbReference>
<dbReference type="Pfam" id="PF00719">
    <property type="entry name" value="Pyrophosphatase"/>
    <property type="match status" value="1"/>
</dbReference>
<dbReference type="SUPFAM" id="SSF50324">
    <property type="entry name" value="Inorganic pyrophosphatase"/>
    <property type="match status" value="1"/>
</dbReference>
<dbReference type="PROSITE" id="PS00387">
    <property type="entry name" value="PPASE"/>
    <property type="match status" value="1"/>
</dbReference>
<keyword id="KW-0963">Cytoplasm</keyword>
<keyword id="KW-0378">Hydrolase</keyword>
<keyword id="KW-0460">Magnesium</keyword>
<keyword id="KW-0479">Metal-binding</keyword>
<keyword id="KW-1185">Reference proteome</keyword>
<proteinExistence type="inferred from homology"/>
<name>IPYR_HAEDU</name>
<feature type="chain" id="PRO_0000137499" description="Inorganic pyrophosphatase">
    <location>
        <begin position="1"/>
        <end position="175"/>
    </location>
</feature>
<feature type="binding site" evidence="1">
    <location>
        <position position="30"/>
    </location>
    <ligand>
        <name>substrate</name>
    </ligand>
</feature>
<feature type="binding site" evidence="1">
    <location>
        <position position="44"/>
    </location>
    <ligand>
        <name>substrate</name>
    </ligand>
</feature>
<feature type="binding site" evidence="1">
    <location>
        <position position="56"/>
    </location>
    <ligand>
        <name>substrate</name>
    </ligand>
</feature>
<feature type="binding site" evidence="1">
    <location>
        <position position="66"/>
    </location>
    <ligand>
        <name>Mg(2+)</name>
        <dbReference type="ChEBI" id="CHEBI:18420"/>
        <label>1</label>
    </ligand>
</feature>
<feature type="binding site" evidence="1">
    <location>
        <position position="71"/>
    </location>
    <ligand>
        <name>Mg(2+)</name>
        <dbReference type="ChEBI" id="CHEBI:18420"/>
        <label>1</label>
    </ligand>
</feature>
<feature type="binding site" evidence="1">
    <location>
        <position position="71"/>
    </location>
    <ligand>
        <name>Mg(2+)</name>
        <dbReference type="ChEBI" id="CHEBI:18420"/>
        <label>2</label>
    </ligand>
</feature>
<feature type="binding site" evidence="1">
    <location>
        <position position="103"/>
    </location>
    <ligand>
        <name>Mg(2+)</name>
        <dbReference type="ChEBI" id="CHEBI:18420"/>
        <label>1</label>
    </ligand>
</feature>
<feature type="binding site" evidence="1">
    <location>
        <position position="142"/>
    </location>
    <ligand>
        <name>substrate</name>
    </ligand>
</feature>